<evidence type="ECO:0000250" key="1"/>
<evidence type="ECO:0000255" key="2"/>
<evidence type="ECO:0000256" key="3">
    <source>
        <dbReference type="SAM" id="MobiDB-lite"/>
    </source>
</evidence>
<evidence type="ECO:0000305" key="4"/>
<name>STC_ANGAU</name>
<dbReference type="EMBL" id="M36967">
    <property type="protein sequence ID" value="AAB91483.1"/>
    <property type="molecule type" value="mRNA"/>
</dbReference>
<dbReference type="PIR" id="A54648">
    <property type="entry name" value="A54648"/>
</dbReference>
<dbReference type="SMR" id="P18301"/>
<dbReference type="GlyCosmos" id="P18301">
    <property type="glycosylation" value="1 site, No reported glycans"/>
</dbReference>
<dbReference type="GO" id="GO:0005615">
    <property type="term" value="C:extracellular space"/>
    <property type="evidence" value="ECO:0007669"/>
    <property type="project" value="TreeGrafter"/>
</dbReference>
<dbReference type="GO" id="GO:0005179">
    <property type="term" value="F:hormone activity"/>
    <property type="evidence" value="ECO:0007669"/>
    <property type="project" value="UniProtKB-KW"/>
</dbReference>
<dbReference type="GO" id="GO:0006874">
    <property type="term" value="P:intracellular calcium ion homeostasis"/>
    <property type="evidence" value="ECO:0007669"/>
    <property type="project" value="TreeGrafter"/>
</dbReference>
<dbReference type="InterPro" id="IPR004978">
    <property type="entry name" value="Stanniocalcin"/>
</dbReference>
<dbReference type="PANTHER" id="PTHR11245">
    <property type="entry name" value="STANNIOCALCIN"/>
    <property type="match status" value="1"/>
</dbReference>
<dbReference type="PANTHER" id="PTHR11245:SF7">
    <property type="entry name" value="STANNIOCALCIN"/>
    <property type="match status" value="1"/>
</dbReference>
<dbReference type="Pfam" id="PF03298">
    <property type="entry name" value="Stanniocalcin"/>
    <property type="match status" value="1"/>
</dbReference>
<reference key="1">
    <citation type="journal article" date="1987" name="Mol. Cell. Endocrinol.">
        <title>Purification and cloning of a corpuscles of Stannius protein from Anguilla australis.</title>
        <authorList>
            <person name="Butkus A."/>
            <person name="Roche P.J."/>
            <person name="Fernley R.T."/>
            <person name="Haralambidis J."/>
            <person name="Penschow J.D."/>
            <person name="Ryan G.B."/>
            <person name="Trahair J.F."/>
            <person name="Tregear G.W."/>
            <person name="Coghlan J.P."/>
        </authorList>
    </citation>
    <scope>NUCLEOTIDE SEQUENCE [MRNA]</scope>
    <scope>PROTEIN SEQUENCE OF 33-57</scope>
</reference>
<reference key="2">
    <citation type="submission" date="1997-12" db="EMBL/GenBank/DDBJ databases">
        <authorList>
            <person name="Roche P.J."/>
        </authorList>
    </citation>
    <scope>SEQUENCE REVISION</scope>
</reference>
<organism>
    <name type="scientific">Anguilla australis</name>
    <name type="common">Australian eel</name>
    <dbReference type="NCBI Taxonomy" id="7940"/>
    <lineage>
        <taxon>Eukaryota</taxon>
        <taxon>Metazoa</taxon>
        <taxon>Chordata</taxon>
        <taxon>Craniata</taxon>
        <taxon>Vertebrata</taxon>
        <taxon>Euteleostomi</taxon>
        <taxon>Actinopterygii</taxon>
        <taxon>Neopterygii</taxon>
        <taxon>Teleostei</taxon>
        <taxon>Anguilliformes</taxon>
        <taxon>Anguillidae</taxon>
        <taxon>Anguilla</taxon>
    </lineage>
</organism>
<gene>
    <name type="primary">stc</name>
</gene>
<proteinExistence type="evidence at protein level"/>
<sequence length="250" mass="27174">MLRMSGLILTLVLVTAAYEQDESEPLSPRTARFSASSPSDVARCLNGALQVGCSAFACLDNSTCNTDGMHEICRSFLHGAAKFDTQGKTFVKESLKCIANGITSKVFLTIRRCSSFQKMISEVQEECYSKLDLCSVAQSNPEAMGEVAQVPSQFPNRYYSTLLQSLLTCDEDTVEQVRAGLVSRLEPEMGVLFQLLQTKACPPSAAGGTGPVGAGGSWRWPMGPPMFKIQPNLRSRDPTHLFAKKRSTSS</sequence>
<protein>
    <recommendedName>
        <fullName>Stanniocalcin</fullName>
        <shortName>STC</shortName>
    </recommendedName>
    <alternativeName>
        <fullName>Corpuscles of Stannius protein</fullName>
        <shortName>CS</shortName>
    </alternativeName>
    <alternativeName>
        <fullName>Hypocalcin</fullName>
    </alternativeName>
    <alternativeName>
        <fullName>Teleocalcin</fullName>
    </alternativeName>
</protein>
<feature type="signal peptide" evidence="2">
    <location>
        <begin position="1"/>
        <end position="17"/>
    </location>
</feature>
<feature type="propeptide" id="PRO_0000033308" evidence="2">
    <location>
        <begin position="18"/>
        <end position="32"/>
    </location>
</feature>
<feature type="chain" id="PRO_0000033309" description="Stanniocalcin">
    <location>
        <begin position="33"/>
        <end position="250"/>
    </location>
</feature>
<feature type="region of interest" description="Disordered" evidence="3">
    <location>
        <begin position="228"/>
        <end position="250"/>
    </location>
</feature>
<feature type="glycosylation site" description="N-linked (GlcNAc...) asparagine" evidence="4">
    <location>
        <position position="61"/>
    </location>
</feature>
<feature type="disulfide bond" evidence="1">
    <location>
        <begin position="44"/>
        <end position="58"/>
    </location>
</feature>
<feature type="disulfide bond" evidence="1">
    <location>
        <begin position="53"/>
        <end position="73"/>
    </location>
</feature>
<feature type="disulfide bond" evidence="1">
    <location>
        <begin position="64"/>
        <end position="113"/>
    </location>
</feature>
<feature type="disulfide bond" evidence="1">
    <location>
        <begin position="97"/>
        <end position="127"/>
    </location>
</feature>
<feature type="disulfide bond" evidence="1">
    <location>
        <begin position="134"/>
        <end position="169"/>
    </location>
</feature>
<feature type="disulfide bond" description="Interchain" evidence="1">
    <location>
        <position position="201"/>
    </location>
</feature>
<keyword id="KW-0903">Direct protein sequencing</keyword>
<keyword id="KW-1015">Disulfide bond</keyword>
<keyword id="KW-0325">Glycoprotein</keyword>
<keyword id="KW-0372">Hormone</keyword>
<keyword id="KW-0732">Signal</keyword>
<comment type="function">
    <text>Its primary function is the prevention of hypercalcemia. Upon release into the circulation, it lowers calcium transport by the gills, thereby reducing its rate of influx from the environment into the extracellular compartment. STC also stimulates phosphate reabsorption by renal proximal tubules. The consequence of this action is increased levels of plasma phosphate, which combines with excess calcium and promotes its disposal into bone and scales.</text>
</comment>
<comment type="subunit">
    <text>Homodimer; disulfide-linked.</text>
</comment>
<comment type="tissue specificity">
    <text>Corpuscles of Stannius.</text>
</comment>
<comment type="similarity">
    <text evidence="4">Belongs to the stanniocalcin family.</text>
</comment>
<accession>P18301</accession>